<feature type="chain" id="PRO_0000364076" description="Oxaloacetate decarboxylase">
    <location>
        <begin position="1"/>
        <end position="289"/>
    </location>
</feature>
<feature type="binding site" evidence="1">
    <location>
        <position position="47"/>
    </location>
    <ligand>
        <name>substrate</name>
    </ligand>
</feature>
<feature type="binding site" evidence="1">
    <location>
        <position position="85"/>
    </location>
    <ligand>
        <name>Mg(2+)</name>
        <dbReference type="ChEBI" id="CHEBI:18420"/>
    </ligand>
</feature>
<feature type="binding site" evidence="1">
    <location>
        <position position="156"/>
    </location>
    <ligand>
        <name>substrate</name>
    </ligand>
</feature>
<feature type="binding site" evidence="1">
    <location>
        <position position="232"/>
    </location>
    <ligand>
        <name>substrate</name>
    </ligand>
</feature>
<keyword id="KW-0210">Decarboxylase</keyword>
<keyword id="KW-0456">Lyase</keyword>
<keyword id="KW-0460">Magnesium</keyword>
<keyword id="KW-0479">Metal-binding</keyword>
<sequence length="289" mass="30500">MAWRNRRGALRAILSGSHCTRPASVYDPISMRIADDLGFEVGMFGGSVASLAILGDPDIALITLTELAEQVRRMSRAAALPVLVDADHGYGNALNVRRTVQELEAAGAAGLTIEDTLLPQAFGETQPQLISLAEGQGKINAALDARGDPSLVIIGRTGALAITSLDDAIERAQAYQAAGVDALFFTGVKTRPQLDAIAAATTLPIVLGGPSEAITDWDYLAERRVRIAVQGHAPIAAATRAVFETLQAVRNGAAPKQLSGLAAAELMQRVTRGDVVDERCDHFLGLKRS</sequence>
<comment type="function">
    <text evidence="1">Catalyzes the decarboxylation of oxaloacetate into pyruvate. Seems to play a role in maintaining cellular concentrations of bicarbonate and pyruvate.</text>
</comment>
<comment type="catalytic activity">
    <reaction evidence="1">
        <text>oxaloacetate + H(+) = pyruvate + CO2</text>
        <dbReference type="Rhea" id="RHEA:15641"/>
        <dbReference type="ChEBI" id="CHEBI:15361"/>
        <dbReference type="ChEBI" id="CHEBI:15378"/>
        <dbReference type="ChEBI" id="CHEBI:16452"/>
        <dbReference type="ChEBI" id="CHEBI:16526"/>
        <dbReference type="EC" id="4.1.1.112"/>
    </reaction>
</comment>
<comment type="cofactor">
    <cofactor evidence="1">
        <name>Mg(2+)</name>
        <dbReference type="ChEBI" id="CHEBI:18420"/>
    </cofactor>
    <text evidence="1">Binds 1 Mg(2+) ion per subunit.</text>
</comment>
<comment type="subunit">
    <text evidence="1">Homotetramer; dimer of dimers.</text>
</comment>
<comment type="similarity">
    <text evidence="2">Belongs to the isocitrate lyase/PEP mutase superfamily. Oxaloacetate decarboxylase family.</text>
</comment>
<organism>
    <name type="scientific">Rhodopseudomonas palustris (strain BisA53)</name>
    <dbReference type="NCBI Taxonomy" id="316055"/>
    <lineage>
        <taxon>Bacteria</taxon>
        <taxon>Pseudomonadati</taxon>
        <taxon>Pseudomonadota</taxon>
        <taxon>Alphaproteobacteria</taxon>
        <taxon>Hyphomicrobiales</taxon>
        <taxon>Nitrobacteraceae</taxon>
        <taxon>Rhodopseudomonas</taxon>
    </lineage>
</organism>
<reference key="1">
    <citation type="submission" date="2006-09" db="EMBL/GenBank/DDBJ databases">
        <title>Complete sequence of Rhodopseudomonas palustris BisA53.</title>
        <authorList>
            <consortium name="US DOE Joint Genome Institute"/>
            <person name="Copeland A."/>
            <person name="Lucas S."/>
            <person name="Lapidus A."/>
            <person name="Barry K."/>
            <person name="Detter J.C."/>
            <person name="Glavina del Rio T."/>
            <person name="Hammon N."/>
            <person name="Israni S."/>
            <person name="Dalin E."/>
            <person name="Tice H."/>
            <person name="Pitluck S."/>
            <person name="Chain P."/>
            <person name="Malfatti S."/>
            <person name="Shin M."/>
            <person name="Vergez L."/>
            <person name="Schmutz J."/>
            <person name="Larimer F."/>
            <person name="Land M."/>
            <person name="Hauser L."/>
            <person name="Pelletier D.A."/>
            <person name="Kyrpides N."/>
            <person name="Kim E."/>
            <person name="Harwood C.S."/>
            <person name="Oda Y."/>
            <person name="Richardson P."/>
        </authorList>
    </citation>
    <scope>NUCLEOTIDE SEQUENCE [LARGE SCALE GENOMIC DNA]</scope>
    <source>
        <strain>BisA53</strain>
    </source>
</reference>
<name>OADC_RHOP5</name>
<dbReference type="EC" id="4.1.1.112" evidence="1"/>
<dbReference type="EMBL" id="CP000463">
    <property type="protein sequence ID" value="ABJ07370.1"/>
    <property type="molecule type" value="Genomic_DNA"/>
</dbReference>
<dbReference type="SMR" id="Q07L14"/>
<dbReference type="STRING" id="316055.RPE_3438"/>
<dbReference type="KEGG" id="rpe:RPE_3438"/>
<dbReference type="eggNOG" id="COG2513">
    <property type="taxonomic scope" value="Bacteria"/>
</dbReference>
<dbReference type="HOGENOM" id="CLU_027389_3_2_5"/>
<dbReference type="OrthoDB" id="9771433at2"/>
<dbReference type="GO" id="GO:0000287">
    <property type="term" value="F:magnesium ion binding"/>
    <property type="evidence" value="ECO:0007669"/>
    <property type="project" value="UniProtKB-UniRule"/>
</dbReference>
<dbReference type="GO" id="GO:0046421">
    <property type="term" value="F:methylisocitrate lyase activity"/>
    <property type="evidence" value="ECO:0007669"/>
    <property type="project" value="TreeGrafter"/>
</dbReference>
<dbReference type="GO" id="GO:0008948">
    <property type="term" value="F:oxaloacetate decarboxylase activity"/>
    <property type="evidence" value="ECO:0007669"/>
    <property type="project" value="UniProtKB-UniRule"/>
</dbReference>
<dbReference type="GO" id="GO:0006107">
    <property type="term" value="P:oxaloacetate metabolic process"/>
    <property type="evidence" value="ECO:0007669"/>
    <property type="project" value="UniProtKB-UniRule"/>
</dbReference>
<dbReference type="GO" id="GO:0019629">
    <property type="term" value="P:propionate catabolic process, 2-methylcitrate cycle"/>
    <property type="evidence" value="ECO:0007669"/>
    <property type="project" value="TreeGrafter"/>
</dbReference>
<dbReference type="GO" id="GO:0042866">
    <property type="term" value="P:pyruvate biosynthetic process"/>
    <property type="evidence" value="ECO:0007669"/>
    <property type="project" value="UniProtKB-UniRule"/>
</dbReference>
<dbReference type="CDD" id="cd00377">
    <property type="entry name" value="ICL_PEPM"/>
    <property type="match status" value="1"/>
</dbReference>
<dbReference type="Gene3D" id="3.20.20.60">
    <property type="entry name" value="Phosphoenolpyruvate-binding domains"/>
    <property type="match status" value="1"/>
</dbReference>
<dbReference type="HAMAP" id="MF_01299">
    <property type="entry name" value="OadC"/>
    <property type="match status" value="1"/>
</dbReference>
<dbReference type="InterPro" id="IPR039556">
    <property type="entry name" value="ICL/PEPM"/>
</dbReference>
<dbReference type="InterPro" id="IPR023687">
    <property type="entry name" value="Oxaloacetate_deCOase_bac"/>
</dbReference>
<dbReference type="InterPro" id="IPR015813">
    <property type="entry name" value="Pyrv/PenolPyrv_kinase-like_dom"/>
</dbReference>
<dbReference type="InterPro" id="IPR040442">
    <property type="entry name" value="Pyrv_kinase-like_dom_sf"/>
</dbReference>
<dbReference type="PANTHER" id="PTHR42905:SF3">
    <property type="entry name" value="OXALOACETATE DECARBOXYLASE"/>
    <property type="match status" value="1"/>
</dbReference>
<dbReference type="PANTHER" id="PTHR42905">
    <property type="entry name" value="PHOSPHOENOLPYRUVATE CARBOXYLASE"/>
    <property type="match status" value="1"/>
</dbReference>
<dbReference type="Pfam" id="PF13714">
    <property type="entry name" value="PEP_mutase"/>
    <property type="match status" value="1"/>
</dbReference>
<dbReference type="SUPFAM" id="SSF51621">
    <property type="entry name" value="Phosphoenolpyruvate/pyruvate domain"/>
    <property type="match status" value="1"/>
</dbReference>
<accession>Q07L14</accession>
<evidence type="ECO:0000255" key="1">
    <source>
        <dbReference type="HAMAP-Rule" id="MF_01299"/>
    </source>
</evidence>
<evidence type="ECO:0000305" key="2"/>
<proteinExistence type="inferred from homology"/>
<protein>
    <recommendedName>
        <fullName evidence="1">Oxaloacetate decarboxylase</fullName>
        <ecNumber evidence="1">4.1.1.112</ecNumber>
    </recommendedName>
</protein>
<gene>
    <name type="ordered locus">RPE_3438</name>
</gene>